<geneLocation type="cyanelle"/>
<evidence type="ECO:0000250" key="1"/>
<evidence type="ECO:0000305" key="2"/>
<sequence length="161" mass="17283">MQDAITAVINAADVQGKYLDTASVEKLKSYFQTGELRVRAAATIAANSSAIIKEAVAKSLLYSDITRPGGNMYTTRRYAACIRDLDYYVRYATYAMLAGDTSILDERVLNGLKETYNSLGVPVGATIQAIQAAKEVTAGLVGPDAGREMGIYYDYISSGLG</sequence>
<proteinExistence type="inferred from homology"/>
<accession>P00320</accession>
<organism>
    <name type="scientific">Cyanophora paradoxa</name>
    <dbReference type="NCBI Taxonomy" id="2762"/>
    <lineage>
        <taxon>Eukaryota</taxon>
        <taxon>Glaucocystophyceae</taxon>
        <taxon>Cyanophoraceae</taxon>
        <taxon>Cyanophora</taxon>
    </lineage>
</organism>
<keyword id="KW-0042">Antenna complex</keyword>
<keyword id="KW-0089">Bile pigment</keyword>
<keyword id="KW-0157">Chromophore</keyword>
<keyword id="KW-0194">Cyanelle</keyword>
<keyword id="KW-0249">Electron transport</keyword>
<keyword id="KW-0472">Membrane</keyword>
<keyword id="KW-0488">Methylation</keyword>
<keyword id="KW-0602">Photosynthesis</keyword>
<keyword id="KW-0605">Phycobilisome</keyword>
<keyword id="KW-0934">Plastid</keyword>
<keyword id="KW-0793">Thylakoid</keyword>
<keyword id="KW-0813">Transport</keyword>
<reference key="1">
    <citation type="journal article" date="1985" name="Proc. Natl. Acad. Sci. U.S.A.">
        <title>Molecular cloning and nucleotide sequence of the alpha and beta subunits of allophycocyanin from the cyanelle genome of Cyanophora paradoxa.</title>
        <authorList>
            <person name="Bryant D.A."/>
            <person name="de Lorimier R."/>
            <person name="Lambert D.H."/>
            <person name="Dubbs J.M."/>
            <person name="Stirewalt V.L."/>
            <person name="Stevens S.E. Jr."/>
            <person name="Porter R.D."/>
            <person name="Tam J."/>
            <person name="Jay E."/>
        </authorList>
    </citation>
    <scope>NUCLEOTIDE SEQUENCE [GENOMIC DNA]</scope>
</reference>
<reference key="2">
    <citation type="journal article" date="1995" name="Plant Mol. Biol. Rep.">
        <title>Nucleotide sequence of the cyanelle DNA from Cyanophora paradoxa.</title>
        <authorList>
            <person name="Stirewalt V.L."/>
            <person name="Michalowski C.B."/>
            <person name="Loeffelhardt W."/>
            <person name="Bohnert H.J."/>
            <person name="Bryant D.A."/>
        </authorList>
    </citation>
    <scope>NUCLEOTIDE SEQUENCE [LARGE SCALE GENOMIC DNA]</scope>
    <source>
        <strain>UTEX LB 555 / Pringsheim</strain>
    </source>
</reference>
<reference key="3">
    <citation type="book" date="1997" name="Eukaryotism and symbiosis">
        <title>The complete sequence of the cyanelle genome of Cyanophora paradoxa: the genetic complexity of a primitive plastid.</title>
        <editorList>
            <person name="Schenk H.E.A."/>
            <person name="Herrmann R."/>
            <person name="Jeon K.W."/>
            <person name="Mueller N.E."/>
            <person name="Schwemmler W."/>
        </editorList>
        <authorList>
            <person name="Loeffelhardt W."/>
            <person name="Stirewalt V.L."/>
            <person name="Michalowski C.B."/>
            <person name="Annarella M."/>
            <person name="Farley J.Y."/>
            <person name="Schluchter W.M."/>
            <person name="Chung S."/>
            <person name="Newmann-Spallart C."/>
            <person name="Steiner J.M."/>
            <person name="Jakowitsch J."/>
            <person name="Bohnert H.J."/>
            <person name="Bryant D.A."/>
        </authorList>
    </citation>
    <scope>NUCLEOTIDE SEQUENCE [LARGE SCALE GENOMIC DNA]</scope>
    <source>
        <strain>UTEX LB 555 / Pringsheim</strain>
    </source>
</reference>
<reference key="4">
    <citation type="journal article" date="1985" name="EMBO J.">
        <title>Major light-harvesting polypeptides encoded in polycistronic transcripts in a eukaryotic alga.</title>
        <authorList>
            <person name="Lemaux P.G."/>
            <person name="Grossman A.R."/>
        </authorList>
    </citation>
    <scope>NUCLEOTIDE SEQUENCE [GENOMIC DNA] OF 1-15</scope>
</reference>
<comment type="function">
    <text>Light-harvesting photosynthetic bile pigment-protein from the phycobiliprotein complex. Allophycocyanin has a maximum absorption at approximately 650 nanometers.</text>
</comment>
<comment type="subunit">
    <text evidence="1">Heterodimer of an alpha and a beta chain.</text>
</comment>
<comment type="subcellular location">
    <subcellularLocation>
        <location evidence="1">Plastid</location>
        <location evidence="1">Cyanelle thylakoid membrane</location>
        <topology evidence="1">Peripheral membrane protein</topology>
        <orientation evidence="1">Stromal side</orientation>
    </subcellularLocation>
    <text evidence="1">Forms the core of the phycobilisome.</text>
</comment>
<comment type="PTM">
    <text evidence="1">Contains one covalently linked phycocyanobilin chromophore.</text>
</comment>
<comment type="similarity">
    <text evidence="2">Belongs to the phycobiliprotein family.</text>
</comment>
<gene>
    <name type="primary">apcB</name>
</gene>
<name>APCB_CYAPA</name>
<dbReference type="EMBL" id="M11159">
    <property type="protein sequence ID" value="AAA31694.1"/>
    <property type="molecule type" value="Genomic_DNA"/>
</dbReference>
<dbReference type="EMBL" id="X02792">
    <property type="protein sequence ID" value="CAA26559.1"/>
    <property type="molecule type" value="Genomic_DNA"/>
</dbReference>
<dbReference type="EMBL" id="U30821">
    <property type="protein sequence ID" value="AAA81189.1"/>
    <property type="molecule type" value="Genomic_DNA"/>
</dbReference>
<dbReference type="PIR" id="A00327">
    <property type="entry name" value="AFKTB"/>
</dbReference>
<dbReference type="RefSeq" id="NP_043158.1">
    <property type="nucleotide sequence ID" value="NC_001675.1"/>
</dbReference>
<dbReference type="SMR" id="P00320"/>
<dbReference type="GeneID" id="801543"/>
<dbReference type="GO" id="GO:0033115">
    <property type="term" value="C:cyanelle thylakoid membrane"/>
    <property type="evidence" value="ECO:0007669"/>
    <property type="project" value="UniProtKB-SubCell"/>
</dbReference>
<dbReference type="GO" id="GO:0030089">
    <property type="term" value="C:phycobilisome"/>
    <property type="evidence" value="ECO:0007669"/>
    <property type="project" value="UniProtKB-KW"/>
</dbReference>
<dbReference type="GO" id="GO:0015979">
    <property type="term" value="P:photosynthesis"/>
    <property type="evidence" value="ECO:0007669"/>
    <property type="project" value="UniProtKB-KW"/>
</dbReference>
<dbReference type="CDD" id="cd12126">
    <property type="entry name" value="APC_beta"/>
    <property type="match status" value="1"/>
</dbReference>
<dbReference type="Gene3D" id="1.10.490.20">
    <property type="entry name" value="Phycocyanins"/>
    <property type="match status" value="1"/>
</dbReference>
<dbReference type="InterPro" id="IPR006245">
    <property type="entry name" value="Allophycocyanin_b"/>
</dbReference>
<dbReference type="InterPro" id="IPR009050">
    <property type="entry name" value="Globin-like_sf"/>
</dbReference>
<dbReference type="InterPro" id="IPR012128">
    <property type="entry name" value="Phycobilisome_asu/bsu"/>
</dbReference>
<dbReference type="InterPro" id="IPR038719">
    <property type="entry name" value="Phycobilisome_asu/bsu_sf"/>
</dbReference>
<dbReference type="NCBIfam" id="TIGR01337">
    <property type="entry name" value="apcB"/>
    <property type="match status" value="1"/>
</dbReference>
<dbReference type="PANTHER" id="PTHR34011:SF3">
    <property type="entry name" value="ALLOPHYCOCYANIN BETA CHAIN"/>
    <property type="match status" value="1"/>
</dbReference>
<dbReference type="PANTHER" id="PTHR34011">
    <property type="entry name" value="PHYCOBILISOME 32.1 KDA LINKER POLYPEPTIDE, PHYCOCYANIN-ASSOCIATED, ROD 2-RELATED"/>
    <property type="match status" value="1"/>
</dbReference>
<dbReference type="Pfam" id="PF00502">
    <property type="entry name" value="Phycobilisome"/>
    <property type="match status" value="1"/>
</dbReference>
<dbReference type="PIRSF" id="PIRSF000081">
    <property type="entry name" value="Phycocyanin"/>
    <property type="match status" value="1"/>
</dbReference>
<dbReference type="SUPFAM" id="SSF46458">
    <property type="entry name" value="Globin-like"/>
    <property type="match status" value="1"/>
</dbReference>
<feature type="chain" id="PRO_0000199095" description="Allophycocyanin beta chain">
    <location>
        <begin position="1"/>
        <end position="161"/>
    </location>
</feature>
<feature type="binding site" description="covalent" evidence="1">
    <location>
        <position position="81"/>
    </location>
    <ligand>
        <name>(2R,3E)-phycocyanobilin</name>
        <dbReference type="ChEBI" id="CHEBI:85275"/>
    </ligand>
</feature>
<feature type="modified residue" description="N4-methylasparagine" evidence="1">
    <location>
        <position position="71"/>
    </location>
</feature>
<protein>
    <recommendedName>
        <fullName>Allophycocyanin beta chain</fullName>
    </recommendedName>
</protein>